<feature type="chain" id="PRO_0000161333" description="Fumarate hydratase class II">
    <location>
        <begin position="1"/>
        <end position="484"/>
    </location>
</feature>
<feature type="region of interest" description="Disordered" evidence="2">
    <location>
        <begin position="1"/>
        <end position="22"/>
    </location>
</feature>
<feature type="active site" description="Proton donor/acceptor" evidence="1">
    <location>
        <position position="200"/>
    </location>
</feature>
<feature type="active site" evidence="1">
    <location>
        <position position="330"/>
    </location>
</feature>
<feature type="binding site" evidence="1">
    <location>
        <begin position="110"/>
        <end position="112"/>
    </location>
    <ligand>
        <name>substrate</name>
    </ligand>
</feature>
<feature type="binding site" description="in site B" evidence="1">
    <location>
        <begin position="141"/>
        <end position="144"/>
    </location>
    <ligand>
        <name>substrate</name>
    </ligand>
</feature>
<feature type="binding site" evidence="1">
    <location>
        <begin position="151"/>
        <end position="153"/>
    </location>
    <ligand>
        <name>substrate</name>
    </ligand>
</feature>
<feature type="binding site" evidence="1">
    <location>
        <position position="199"/>
    </location>
    <ligand>
        <name>substrate</name>
    </ligand>
</feature>
<feature type="binding site" evidence="1">
    <location>
        <position position="331"/>
    </location>
    <ligand>
        <name>substrate</name>
    </ligand>
</feature>
<feature type="binding site" evidence="1">
    <location>
        <begin position="336"/>
        <end position="338"/>
    </location>
    <ligand>
        <name>substrate</name>
    </ligand>
</feature>
<feature type="site" description="Important for catalytic activity" evidence="1">
    <location>
        <position position="343"/>
    </location>
</feature>
<proteinExistence type="inferred from homology"/>
<name>FUMC_METAC</name>
<gene>
    <name evidence="1" type="primary">fumC</name>
    <name type="ordered locus">MA_1001</name>
</gene>
<comment type="function">
    <text evidence="1">Involved in the TCA cycle. Catalyzes the stereospecific interconversion of fumarate to L-malate.</text>
</comment>
<comment type="catalytic activity">
    <reaction evidence="1">
        <text>(S)-malate = fumarate + H2O</text>
        <dbReference type="Rhea" id="RHEA:12460"/>
        <dbReference type="ChEBI" id="CHEBI:15377"/>
        <dbReference type="ChEBI" id="CHEBI:15589"/>
        <dbReference type="ChEBI" id="CHEBI:29806"/>
        <dbReference type="EC" id="4.2.1.2"/>
    </reaction>
</comment>
<comment type="pathway">
    <text evidence="1">Carbohydrate metabolism; tricarboxylic acid cycle; (S)-malate from fumarate: step 1/1.</text>
</comment>
<comment type="subunit">
    <text evidence="1">Homotetramer.</text>
</comment>
<comment type="subcellular location">
    <subcellularLocation>
        <location evidence="1">Cytoplasm</location>
    </subcellularLocation>
</comment>
<comment type="miscellaneous">
    <text evidence="1">There are 2 substrate-binding sites: the catalytic A site, and the non-catalytic B site that may play a role in the transfer of substrate or product between the active site and the solvent. Alternatively, the B site may bind allosteric effectors.</text>
</comment>
<comment type="similarity">
    <text evidence="1">Belongs to the class-II fumarase/aspartase family. Fumarase subfamily.</text>
</comment>
<comment type="sequence caution" evidence="3">
    <conflict type="erroneous initiation">
        <sequence resource="EMBL-CDS" id="AAM04432"/>
    </conflict>
    <text>Extended N-terminus.</text>
</comment>
<protein>
    <recommendedName>
        <fullName evidence="1">Fumarate hydratase class II</fullName>
        <shortName evidence="1">Fumarase C</shortName>
        <ecNumber evidence="1">4.2.1.2</ecNumber>
    </recommendedName>
    <alternativeName>
        <fullName evidence="1">Aerobic fumarase</fullName>
    </alternativeName>
    <alternativeName>
        <fullName evidence="1">Iron-independent fumarase</fullName>
    </alternativeName>
</protein>
<reference key="1">
    <citation type="journal article" date="2002" name="Genome Res.">
        <title>The genome of Methanosarcina acetivorans reveals extensive metabolic and physiological diversity.</title>
        <authorList>
            <person name="Galagan J.E."/>
            <person name="Nusbaum C."/>
            <person name="Roy A."/>
            <person name="Endrizzi M.G."/>
            <person name="Macdonald P."/>
            <person name="FitzHugh W."/>
            <person name="Calvo S."/>
            <person name="Engels R."/>
            <person name="Smirnov S."/>
            <person name="Atnoor D."/>
            <person name="Brown A."/>
            <person name="Allen N."/>
            <person name="Naylor J."/>
            <person name="Stange-Thomann N."/>
            <person name="DeArellano K."/>
            <person name="Johnson R."/>
            <person name="Linton L."/>
            <person name="McEwan P."/>
            <person name="McKernan K."/>
            <person name="Talamas J."/>
            <person name="Tirrell A."/>
            <person name="Ye W."/>
            <person name="Zimmer A."/>
            <person name="Barber R.D."/>
            <person name="Cann I."/>
            <person name="Graham D.E."/>
            <person name="Grahame D.A."/>
            <person name="Guss A.M."/>
            <person name="Hedderich R."/>
            <person name="Ingram-Smith C."/>
            <person name="Kuettner H.C."/>
            <person name="Krzycki J.A."/>
            <person name="Leigh J.A."/>
            <person name="Li W."/>
            <person name="Liu J."/>
            <person name="Mukhopadhyay B."/>
            <person name="Reeve J.N."/>
            <person name="Smith K."/>
            <person name="Springer T.A."/>
            <person name="Umayam L.A."/>
            <person name="White O."/>
            <person name="White R.H."/>
            <person name="de Macario E.C."/>
            <person name="Ferry J.G."/>
            <person name="Jarrell K.F."/>
            <person name="Jing H."/>
            <person name="Macario A.J.L."/>
            <person name="Paulsen I.T."/>
            <person name="Pritchett M."/>
            <person name="Sowers K.R."/>
            <person name="Swanson R.V."/>
            <person name="Zinder S.H."/>
            <person name="Lander E."/>
            <person name="Metcalf W.W."/>
            <person name="Birren B."/>
        </authorList>
    </citation>
    <scope>NUCLEOTIDE SEQUENCE [LARGE SCALE GENOMIC DNA]</scope>
    <source>
        <strain>ATCC 35395 / DSM 2834 / JCM 12185 / C2A</strain>
    </source>
</reference>
<dbReference type="EC" id="4.2.1.2" evidence="1"/>
<dbReference type="EMBL" id="AE010299">
    <property type="protein sequence ID" value="AAM04432.1"/>
    <property type="status" value="ALT_INIT"/>
    <property type="molecule type" value="Genomic_DNA"/>
</dbReference>
<dbReference type="SMR" id="Q8TS07"/>
<dbReference type="STRING" id="188937.MA_1001"/>
<dbReference type="EnsemblBacteria" id="AAM04432">
    <property type="protein sequence ID" value="AAM04432"/>
    <property type="gene ID" value="MA_1001"/>
</dbReference>
<dbReference type="KEGG" id="mac:MA_1001"/>
<dbReference type="HOGENOM" id="CLU_021594_4_1_2"/>
<dbReference type="InParanoid" id="Q8TS07"/>
<dbReference type="PhylomeDB" id="Q8TS07"/>
<dbReference type="UniPathway" id="UPA00223">
    <property type="reaction ID" value="UER01007"/>
</dbReference>
<dbReference type="Proteomes" id="UP000002487">
    <property type="component" value="Chromosome"/>
</dbReference>
<dbReference type="GO" id="GO:0005737">
    <property type="term" value="C:cytoplasm"/>
    <property type="evidence" value="ECO:0007669"/>
    <property type="project" value="UniProtKB-SubCell"/>
</dbReference>
<dbReference type="GO" id="GO:0004333">
    <property type="term" value="F:fumarate hydratase activity"/>
    <property type="evidence" value="ECO:0000318"/>
    <property type="project" value="GO_Central"/>
</dbReference>
<dbReference type="GO" id="GO:0006106">
    <property type="term" value="P:fumarate metabolic process"/>
    <property type="evidence" value="ECO:0000318"/>
    <property type="project" value="GO_Central"/>
</dbReference>
<dbReference type="GO" id="GO:0006108">
    <property type="term" value="P:malate metabolic process"/>
    <property type="evidence" value="ECO:0000318"/>
    <property type="project" value="GO_Central"/>
</dbReference>
<dbReference type="GO" id="GO:0006099">
    <property type="term" value="P:tricarboxylic acid cycle"/>
    <property type="evidence" value="ECO:0000318"/>
    <property type="project" value="GO_Central"/>
</dbReference>
<dbReference type="CDD" id="cd01362">
    <property type="entry name" value="Fumarase_classII"/>
    <property type="match status" value="1"/>
</dbReference>
<dbReference type="FunFam" id="1.10.40.30:FF:000002">
    <property type="entry name" value="Fumarate hydratase class II"/>
    <property type="match status" value="1"/>
</dbReference>
<dbReference type="FunFam" id="1.10.275.10:FF:000001">
    <property type="entry name" value="Fumarate hydratase, mitochondrial"/>
    <property type="match status" value="1"/>
</dbReference>
<dbReference type="FunFam" id="1.20.200.10:FF:000001">
    <property type="entry name" value="Fumarate hydratase, mitochondrial"/>
    <property type="match status" value="1"/>
</dbReference>
<dbReference type="Gene3D" id="1.10.40.30">
    <property type="entry name" value="Fumarase/aspartase (C-terminal domain)"/>
    <property type="match status" value="1"/>
</dbReference>
<dbReference type="Gene3D" id="1.20.200.10">
    <property type="entry name" value="Fumarase/aspartase (Central domain)"/>
    <property type="match status" value="1"/>
</dbReference>
<dbReference type="Gene3D" id="1.10.275.10">
    <property type="entry name" value="Fumarase/aspartase (N-terminal domain)"/>
    <property type="match status" value="1"/>
</dbReference>
<dbReference type="HAMAP" id="MF_00743">
    <property type="entry name" value="FumaraseC"/>
    <property type="match status" value="1"/>
</dbReference>
<dbReference type="InterPro" id="IPR005677">
    <property type="entry name" value="Fum_hydII"/>
</dbReference>
<dbReference type="InterPro" id="IPR024083">
    <property type="entry name" value="Fumarase/histidase_N"/>
</dbReference>
<dbReference type="InterPro" id="IPR018951">
    <property type="entry name" value="Fumarase_C_C"/>
</dbReference>
<dbReference type="InterPro" id="IPR020557">
    <property type="entry name" value="Fumarate_lyase_CS"/>
</dbReference>
<dbReference type="InterPro" id="IPR000362">
    <property type="entry name" value="Fumarate_lyase_fam"/>
</dbReference>
<dbReference type="InterPro" id="IPR022761">
    <property type="entry name" value="Fumarate_lyase_N"/>
</dbReference>
<dbReference type="InterPro" id="IPR008948">
    <property type="entry name" value="L-Aspartase-like"/>
</dbReference>
<dbReference type="NCBIfam" id="TIGR00979">
    <property type="entry name" value="fumC_II"/>
    <property type="match status" value="1"/>
</dbReference>
<dbReference type="PANTHER" id="PTHR11444">
    <property type="entry name" value="ASPARTATEAMMONIA/ARGININOSUCCINATE/ADENYLOSUCCINATE LYASE"/>
    <property type="match status" value="1"/>
</dbReference>
<dbReference type="PANTHER" id="PTHR11444:SF1">
    <property type="entry name" value="FUMARATE HYDRATASE, MITOCHONDRIAL"/>
    <property type="match status" value="1"/>
</dbReference>
<dbReference type="Pfam" id="PF10415">
    <property type="entry name" value="FumaraseC_C"/>
    <property type="match status" value="1"/>
</dbReference>
<dbReference type="Pfam" id="PF00206">
    <property type="entry name" value="Lyase_1"/>
    <property type="match status" value="1"/>
</dbReference>
<dbReference type="PRINTS" id="PR00145">
    <property type="entry name" value="ARGSUCLYASE"/>
</dbReference>
<dbReference type="PRINTS" id="PR00149">
    <property type="entry name" value="FUMRATELYASE"/>
</dbReference>
<dbReference type="SUPFAM" id="SSF48557">
    <property type="entry name" value="L-aspartase-like"/>
    <property type="match status" value="1"/>
</dbReference>
<dbReference type="PROSITE" id="PS00163">
    <property type="entry name" value="FUMARATE_LYASES"/>
    <property type="match status" value="1"/>
</dbReference>
<organism>
    <name type="scientific">Methanosarcina acetivorans (strain ATCC 35395 / DSM 2834 / JCM 12185 / C2A)</name>
    <dbReference type="NCBI Taxonomy" id="188937"/>
    <lineage>
        <taxon>Archaea</taxon>
        <taxon>Methanobacteriati</taxon>
        <taxon>Methanobacteriota</taxon>
        <taxon>Stenosarchaea group</taxon>
        <taxon>Methanomicrobia</taxon>
        <taxon>Methanosarcinales</taxon>
        <taxon>Methanosarcinaceae</taxon>
        <taxon>Methanosarcina</taxon>
    </lineage>
</organism>
<keyword id="KW-0963">Cytoplasm</keyword>
<keyword id="KW-0456">Lyase</keyword>
<keyword id="KW-1185">Reference proteome</keyword>
<keyword id="KW-0816">Tricarboxylic acid cycle</keyword>
<sequence length="484" mass="52127">MPSILDLPIGTGATGKRKESDSLGEVEVPADHYWGAQTQRSLIHFSIGDDYMPKEVYHAYGYVKKAAALVNEAAGIIPPWKAELIARVADEVIAGKLDSEFPLYVWQTGSGTQSNMNVNEVISNRAIQLVGGSLGSKHPVHPNDDVNMSQSSNDTFPTAMHIATVLEFSNRLIPAVTVLEESIWAKAREWVDIVKIGRTHLQDATPLTVGQEWSGYATQLDDALAFVKHSLRGLYRLAIGGTAVGTGINTPPDFGEKVADEIARLTGHPFVTAPNKFAAQGSLDAMVTSSAALRTLAVALMKIANDLQWLGSGPRSGLHELILPSDEPGSSIMPGKVNPTQEEAMLMVCIQVIGEDNAVAFAGSQGNFELNAMCPIIINNVLHSARTLGDACVKFREYGINGIMLDRSRIDKFVGTSLMLVTALSPVIGYDKASAIVQRALDENTTLREAAVKGGFISAEDFDRIVDPKKMVGDPRHDLKLASE</sequence>
<accession>Q8TS07</accession>
<evidence type="ECO:0000255" key="1">
    <source>
        <dbReference type="HAMAP-Rule" id="MF_00743"/>
    </source>
</evidence>
<evidence type="ECO:0000256" key="2">
    <source>
        <dbReference type="SAM" id="MobiDB-lite"/>
    </source>
</evidence>
<evidence type="ECO:0000305" key="3"/>